<feature type="chain" id="PRO_0000048201" description="Tubulin alpha chain">
    <location>
        <begin position="1"/>
        <end position="450"/>
    </location>
</feature>
<feature type="chain" id="PRO_0000437405" description="Detyrosinated tubulin alpha chain" evidence="4">
    <location>
        <begin position="1"/>
        <end position="449"/>
    </location>
</feature>
<feature type="short sequence motif" description="MREC motif" evidence="2">
    <location>
        <begin position="1"/>
        <end position="4"/>
    </location>
</feature>
<feature type="active site" evidence="2">
    <location>
        <position position="254"/>
    </location>
</feature>
<feature type="binding site" evidence="2">
    <location>
        <position position="11"/>
    </location>
    <ligand>
        <name>GTP</name>
        <dbReference type="ChEBI" id="CHEBI:37565"/>
    </ligand>
</feature>
<feature type="binding site" evidence="2">
    <location>
        <position position="71"/>
    </location>
    <ligand>
        <name>GTP</name>
        <dbReference type="ChEBI" id="CHEBI:37565"/>
    </ligand>
</feature>
<feature type="binding site" evidence="2">
    <location>
        <position position="71"/>
    </location>
    <ligand>
        <name>Mg(2+)</name>
        <dbReference type="ChEBI" id="CHEBI:18420"/>
    </ligand>
</feature>
<feature type="binding site" evidence="2">
    <location>
        <position position="140"/>
    </location>
    <ligand>
        <name>GTP</name>
        <dbReference type="ChEBI" id="CHEBI:37565"/>
    </ligand>
</feature>
<feature type="binding site" evidence="2">
    <location>
        <position position="144"/>
    </location>
    <ligand>
        <name>GTP</name>
        <dbReference type="ChEBI" id="CHEBI:37565"/>
    </ligand>
</feature>
<feature type="binding site" evidence="2">
    <location>
        <position position="145"/>
    </location>
    <ligand>
        <name>GTP</name>
        <dbReference type="ChEBI" id="CHEBI:37565"/>
    </ligand>
</feature>
<feature type="binding site" evidence="2">
    <location>
        <position position="179"/>
    </location>
    <ligand>
        <name>GTP</name>
        <dbReference type="ChEBI" id="CHEBI:37565"/>
    </ligand>
</feature>
<feature type="binding site" evidence="2">
    <location>
        <position position="206"/>
    </location>
    <ligand>
        <name>GTP</name>
        <dbReference type="ChEBI" id="CHEBI:37565"/>
    </ligand>
</feature>
<feature type="binding site" evidence="2">
    <location>
        <position position="228"/>
    </location>
    <ligand>
        <name>GTP</name>
        <dbReference type="ChEBI" id="CHEBI:37565"/>
    </ligand>
</feature>
<feature type="site" description="Involved in polymerization">
    <location>
        <position position="450"/>
    </location>
</feature>
<feature type="modified residue" description="N6-acetyllysine" evidence="1 4">
    <location>
        <position position="40"/>
    </location>
</feature>
<feature type="modified residue" description="5-glutamyl polyglutamate" evidence="3">
    <location>
        <position position="444"/>
    </location>
</feature>
<dbReference type="EC" id="3.6.5.-" evidence="2"/>
<dbReference type="EMBL" id="Z31585">
    <property type="protein sequence ID" value="CAA83457.1"/>
    <property type="molecule type" value="mRNA"/>
</dbReference>
<dbReference type="PIR" id="S43138">
    <property type="entry name" value="S43138"/>
</dbReference>
<dbReference type="SMR" id="Q91060"/>
<dbReference type="GO" id="GO:0005737">
    <property type="term" value="C:cytoplasm"/>
    <property type="evidence" value="ECO:0007669"/>
    <property type="project" value="UniProtKB-KW"/>
</dbReference>
<dbReference type="GO" id="GO:0005874">
    <property type="term" value="C:microtubule"/>
    <property type="evidence" value="ECO:0007669"/>
    <property type="project" value="UniProtKB-KW"/>
</dbReference>
<dbReference type="GO" id="GO:0005525">
    <property type="term" value="F:GTP binding"/>
    <property type="evidence" value="ECO:0007669"/>
    <property type="project" value="UniProtKB-KW"/>
</dbReference>
<dbReference type="GO" id="GO:0016787">
    <property type="term" value="F:hydrolase activity"/>
    <property type="evidence" value="ECO:0007669"/>
    <property type="project" value="UniProtKB-KW"/>
</dbReference>
<dbReference type="GO" id="GO:0046872">
    <property type="term" value="F:metal ion binding"/>
    <property type="evidence" value="ECO:0007669"/>
    <property type="project" value="UniProtKB-KW"/>
</dbReference>
<dbReference type="GO" id="GO:0005200">
    <property type="term" value="F:structural constituent of cytoskeleton"/>
    <property type="evidence" value="ECO:0007669"/>
    <property type="project" value="InterPro"/>
</dbReference>
<dbReference type="GO" id="GO:0007017">
    <property type="term" value="P:microtubule-based process"/>
    <property type="evidence" value="ECO:0007669"/>
    <property type="project" value="InterPro"/>
</dbReference>
<dbReference type="CDD" id="cd02186">
    <property type="entry name" value="alpha_tubulin"/>
    <property type="match status" value="1"/>
</dbReference>
<dbReference type="FunFam" id="1.10.287.600:FF:000005">
    <property type="entry name" value="Tubulin alpha chain"/>
    <property type="match status" value="1"/>
</dbReference>
<dbReference type="FunFam" id="3.30.1330.20:FF:000001">
    <property type="entry name" value="Tubulin alpha chain"/>
    <property type="match status" value="1"/>
</dbReference>
<dbReference type="FunFam" id="3.40.50.1440:FF:000002">
    <property type="entry name" value="Tubulin alpha chain"/>
    <property type="match status" value="1"/>
</dbReference>
<dbReference type="Gene3D" id="1.10.287.600">
    <property type="entry name" value="Helix hairpin bin"/>
    <property type="match status" value="1"/>
</dbReference>
<dbReference type="Gene3D" id="3.30.1330.20">
    <property type="entry name" value="Tubulin/FtsZ, C-terminal domain"/>
    <property type="match status" value="1"/>
</dbReference>
<dbReference type="Gene3D" id="3.40.50.1440">
    <property type="entry name" value="Tubulin/FtsZ, GTPase domain"/>
    <property type="match status" value="1"/>
</dbReference>
<dbReference type="InterPro" id="IPR002452">
    <property type="entry name" value="Alpha_tubulin"/>
</dbReference>
<dbReference type="InterPro" id="IPR008280">
    <property type="entry name" value="Tub_FtsZ_C"/>
</dbReference>
<dbReference type="InterPro" id="IPR000217">
    <property type="entry name" value="Tubulin"/>
</dbReference>
<dbReference type="InterPro" id="IPR037103">
    <property type="entry name" value="Tubulin/FtsZ-like_C"/>
</dbReference>
<dbReference type="InterPro" id="IPR018316">
    <property type="entry name" value="Tubulin/FtsZ_2-layer-sand-dom"/>
</dbReference>
<dbReference type="InterPro" id="IPR036525">
    <property type="entry name" value="Tubulin/FtsZ_GTPase_sf"/>
</dbReference>
<dbReference type="InterPro" id="IPR023123">
    <property type="entry name" value="Tubulin_C"/>
</dbReference>
<dbReference type="InterPro" id="IPR017975">
    <property type="entry name" value="Tubulin_CS"/>
</dbReference>
<dbReference type="InterPro" id="IPR003008">
    <property type="entry name" value="Tubulin_FtsZ_GTPase"/>
</dbReference>
<dbReference type="PANTHER" id="PTHR11588">
    <property type="entry name" value="TUBULIN"/>
    <property type="match status" value="1"/>
</dbReference>
<dbReference type="Pfam" id="PF00091">
    <property type="entry name" value="Tubulin"/>
    <property type="match status" value="1"/>
</dbReference>
<dbReference type="Pfam" id="PF03953">
    <property type="entry name" value="Tubulin_C"/>
    <property type="match status" value="1"/>
</dbReference>
<dbReference type="PRINTS" id="PR01162">
    <property type="entry name" value="ALPHATUBULIN"/>
</dbReference>
<dbReference type="PRINTS" id="PR01161">
    <property type="entry name" value="TUBULIN"/>
</dbReference>
<dbReference type="SMART" id="SM00864">
    <property type="entry name" value="Tubulin"/>
    <property type="match status" value="1"/>
</dbReference>
<dbReference type="SMART" id="SM00865">
    <property type="entry name" value="Tubulin_C"/>
    <property type="match status" value="1"/>
</dbReference>
<dbReference type="SUPFAM" id="SSF55307">
    <property type="entry name" value="Tubulin C-terminal domain-like"/>
    <property type="match status" value="1"/>
</dbReference>
<dbReference type="SUPFAM" id="SSF52490">
    <property type="entry name" value="Tubulin nucleotide-binding domain-like"/>
    <property type="match status" value="1"/>
</dbReference>
<dbReference type="PROSITE" id="PS00227">
    <property type="entry name" value="TUBULIN"/>
    <property type="match status" value="1"/>
</dbReference>
<name>TBA_NOTVI</name>
<organism>
    <name type="scientific">Notophthalmus viridescens</name>
    <name type="common">Eastern newt</name>
    <name type="synonym">Triturus viridescens</name>
    <dbReference type="NCBI Taxonomy" id="8316"/>
    <lineage>
        <taxon>Eukaryota</taxon>
        <taxon>Metazoa</taxon>
        <taxon>Chordata</taxon>
        <taxon>Craniata</taxon>
        <taxon>Vertebrata</taxon>
        <taxon>Euteleostomi</taxon>
        <taxon>Amphibia</taxon>
        <taxon>Batrachia</taxon>
        <taxon>Caudata</taxon>
        <taxon>Salamandroidea</taxon>
        <taxon>Salamandridae</taxon>
        <taxon>Pleurodelinae</taxon>
        <taxon>Notophthalmus</taxon>
    </lineage>
</organism>
<evidence type="ECO:0000250" key="1">
    <source>
        <dbReference type="UniProtKB" id="P41351"/>
    </source>
</evidence>
<evidence type="ECO:0000250" key="2">
    <source>
        <dbReference type="UniProtKB" id="P68363"/>
    </source>
</evidence>
<evidence type="ECO:0000250" key="3">
    <source>
        <dbReference type="UniProtKB" id="P68369"/>
    </source>
</evidence>
<evidence type="ECO:0000250" key="4">
    <source>
        <dbReference type="UniProtKB" id="Q71U36"/>
    </source>
</evidence>
<evidence type="ECO:0000305" key="5"/>
<protein>
    <recommendedName>
        <fullName>Tubulin alpha chain</fullName>
        <ecNumber evidence="2">3.6.5.-</ecNumber>
    </recommendedName>
    <component>
        <recommendedName>
            <fullName>Detyrosinated tubulin alpha chain</fullName>
        </recommendedName>
    </component>
</protein>
<keyword id="KW-0007">Acetylation</keyword>
<keyword id="KW-0963">Cytoplasm</keyword>
<keyword id="KW-0206">Cytoskeleton</keyword>
<keyword id="KW-0342">GTP-binding</keyword>
<keyword id="KW-0378">Hydrolase</keyword>
<keyword id="KW-1017">Isopeptide bond</keyword>
<keyword id="KW-0460">Magnesium</keyword>
<keyword id="KW-0479">Metal-binding</keyword>
<keyword id="KW-0493">Microtubule</keyword>
<keyword id="KW-0547">Nucleotide-binding</keyword>
<proteinExistence type="evidence at transcript level"/>
<accession>Q91060</accession>
<sequence>MRECISVHVGQAGVQMGNACWELYCLEHGIQPDGQMPSDKTIGGGDDSFNTFFSETGAGKHVPRAIFVDLEPSVIDEVRTGTYRQLFHPEQLISGKEDAANNYARGHYTIGKEIIDQVLDRMRKLADQCTGLQGFLVFHSFGGGTGSGFTSLLMERLSVDYGKKSKLEFAIYPAPQVSTAVVEPYNSILTTHTTLEHSDCAFMVDNEAIYDICRRNLDIERPSYTNLNRLISQIVSSITASLRFDGALNVDLTEFQTNLVPYPRIHFPLATYAPVISAEKAYHEQLSVAEITNACFEPANQMVKCDPRHGKYMACCLLYRGDVVPKDVNAAIAAIKTKRSIQFVDWCPTGFKVGINYQPPTAVPGGDLAKVQRAVCMLSNTTAIAEAWARLDHKFDLMYAKRAFVHWYVGEGMEEGEFSEAREDMAALEKDYEEVGLDSYEGEEDEGEEY</sequence>
<comment type="function">
    <text>Tubulin is the major constituent of microtubules, a cylinder consisting of laterally associated linear protofilaments composed of alpha- and beta-tubulin heterodimers. Microtubules grow by the addition of GTP-tubulin dimers to the microtubule end, where a stabilizing cap forms. Below the cap, tubulin dimers are in GDP-bound state, owing to GTPase activity of alpha-tubulin.</text>
</comment>
<comment type="catalytic activity">
    <reaction evidence="2">
        <text>GTP + H2O = GDP + phosphate + H(+)</text>
        <dbReference type="Rhea" id="RHEA:19669"/>
        <dbReference type="ChEBI" id="CHEBI:15377"/>
        <dbReference type="ChEBI" id="CHEBI:15378"/>
        <dbReference type="ChEBI" id="CHEBI:37565"/>
        <dbReference type="ChEBI" id="CHEBI:43474"/>
        <dbReference type="ChEBI" id="CHEBI:58189"/>
    </reaction>
    <physiologicalReaction direction="left-to-right" evidence="2">
        <dbReference type="Rhea" id="RHEA:19670"/>
    </physiologicalReaction>
</comment>
<comment type="cofactor">
    <cofactor evidence="2">
        <name>Mg(2+)</name>
        <dbReference type="ChEBI" id="CHEBI:18420"/>
    </cofactor>
</comment>
<comment type="subunit">
    <text>Dimer of alpha and beta chains. A typical microtubule is a hollow water-filled tube with an outer diameter of 25 nm and an inner diameter of 15 nM. Alpha-beta heterodimers associate head-to-tail to form protofilaments running lengthwise along the microtubule wall with the beta-tubulin subunit facing the microtubule plus end conferring a structural polarity. Microtubules usually have 13 protofilaments but different protofilament numbers can be found in some organisms and specialized cells.</text>
</comment>
<comment type="subcellular location">
    <subcellularLocation>
        <location>Cytoplasm</location>
        <location>Cytoskeleton</location>
    </subcellularLocation>
</comment>
<comment type="domain">
    <text evidence="2">The MREC motif may be critical for tubulin autoregulation.</text>
</comment>
<comment type="PTM">
    <text evidence="3">Some glutamate residues at the C-terminus are polyglycylated, resulting in polyglycine chains on the gamma-carboxyl group. Glycylation is mainly limited to tubulin incorporated into axonemes (cilia and flagella) whereas glutamylation is prevalent in neuronal cells, centrioles, axonemes, and the mitotic spindle. Both modifications can coexist on the same protein on adjacent residues, and lowering polyglycylation levels increases polyglutamylation, and reciprocally. The precise function of polyglycylation is still unclear.</text>
</comment>
<comment type="PTM">
    <text evidence="3 4">Some glutamate residues at the C-terminus are polyglutamylated, resulting in polyglutamate chains on the gamma-carboxyl group (By similarity). Polyglutamylation plays a key role in microtubule severing by spastin (SPAST). SPAST preferentially recognizes and acts on microtubules decorated with short polyglutamate tails: severing activity by SPAST increases as the number of glutamates per tubulin rises from one to eight, but decreases beyond this glutamylation threshold (By similarity).</text>
</comment>
<comment type="PTM">
    <text evidence="4">Acetylation of alpha chains at Lys-40 is located inside the microtubule lumen. This modification has been correlated with increased microtubule stability, intracellular transport and ciliary assembly.</text>
</comment>
<comment type="PTM">
    <text evidence="3 4">Undergoes a tyrosination/detyrosination cycle, the cyclic removal and re-addition of a C-terminal tyrosine residue by the enzymes tubulin tyrosine carboxypeptidase (MATCAP, VASH1 or VASH2) and tubulin tyrosine ligase (TTL), respectively.</text>
</comment>
<comment type="PTM">
    <molecule>Tubulin alpha chain</molecule>
    <text evidence="3 4">Tyrosination promotes microtubule interaction with CAP-Gly microtubule plus-end tracking proteins. Tyrosinated tubulins regulate the initiation of dynein-driven motility.</text>
</comment>
<comment type="PTM">
    <molecule>Detyrosinated tubulin alpha chain</molecule>
    <text evidence="3 4">Detyrosination is involved in metaphase plate congression by guiding chromosomes during mitosis (By similarity). Detyrosination increases microtubules-dependent mechanotransduction in dystrophic cardiac and skeletal muscle. In cardiomyocytes, detyrosinated microtubules are required to resist to contractile compression during contraction (By similarity).</text>
</comment>
<comment type="similarity">
    <text evidence="5">Belongs to the tubulin family.</text>
</comment>
<reference key="1">
    <citation type="submission" date="1994-03" db="EMBL/GenBank/DDBJ databases">
        <title>Conservation of vertebrate alpha-tubulin isotypes in amphibians.</title>
        <authorList>
            <person name="Wu W.L."/>
            <person name="Morgan G.T."/>
        </authorList>
    </citation>
    <scope>NUCLEOTIDE SEQUENCE [MRNA]</scope>
    <source>
        <tissue>Ovary</tissue>
    </source>
</reference>